<sequence>MRHRTGFNPLSCMAAHRRALRRNMVTSLFKFERITTTKPKAAEVRRAAERLITRSKSDSVHNRRQVARFIWDKAVLHKLFADIGPRMREREGGYTRILKLGLRQGDAAHVVVLELVDYTFEKSLKKRARTDSVPARKGAGKKDASRVSGTVPDGQSQKIGKKKE</sequence>
<reference key="1">
    <citation type="journal article" date="2008" name="BMC Microbiol.">
        <title>Complete genome sequence of Treponema pallidum ssp. pallidum strain SS14 determined with oligonucleotide arrays.</title>
        <authorList>
            <person name="Matejkova P."/>
            <person name="Strouhal M."/>
            <person name="Smajs D."/>
            <person name="Norris S.J."/>
            <person name="Palzkill T."/>
            <person name="Petrosino J.F."/>
            <person name="Sodergren E."/>
            <person name="Norton J.E."/>
            <person name="Singh J."/>
            <person name="Richmond T.A."/>
            <person name="Molla M.N."/>
            <person name="Albert T.J."/>
            <person name="Weinstock G.M."/>
        </authorList>
    </citation>
    <scope>NUCLEOTIDE SEQUENCE [LARGE SCALE GENOMIC DNA]</scope>
    <source>
        <strain>SS14</strain>
    </source>
</reference>
<proteinExistence type="inferred from homology"/>
<comment type="subunit">
    <text evidence="1">Part of the 50S ribosomal subunit. Contacts protein L32.</text>
</comment>
<comment type="similarity">
    <text evidence="1">Belongs to the bacterial ribosomal protein bL17 family.</text>
</comment>
<accession>B2S2G1</accession>
<organism>
    <name type="scientific">Treponema pallidum subsp. pallidum (strain SS14)</name>
    <dbReference type="NCBI Taxonomy" id="455434"/>
    <lineage>
        <taxon>Bacteria</taxon>
        <taxon>Pseudomonadati</taxon>
        <taxon>Spirochaetota</taxon>
        <taxon>Spirochaetia</taxon>
        <taxon>Spirochaetales</taxon>
        <taxon>Treponemataceae</taxon>
        <taxon>Treponema</taxon>
    </lineage>
</organism>
<keyword id="KW-0687">Ribonucleoprotein</keyword>
<keyword id="KW-0689">Ribosomal protein</keyword>
<dbReference type="EMBL" id="CP000805">
    <property type="protein sequence ID" value="ACD70640.1"/>
    <property type="molecule type" value="Genomic_DNA"/>
</dbReference>
<dbReference type="RefSeq" id="WP_010881661.1">
    <property type="nucleotide sequence ID" value="NC_021508.1"/>
</dbReference>
<dbReference type="SMR" id="B2S2G1"/>
<dbReference type="GeneID" id="93876001"/>
<dbReference type="KEGG" id="tpp:TPASS_0213"/>
<dbReference type="PATRIC" id="fig|455434.6.peg.217"/>
<dbReference type="Proteomes" id="UP000001202">
    <property type="component" value="Chromosome"/>
</dbReference>
<dbReference type="GO" id="GO:0022625">
    <property type="term" value="C:cytosolic large ribosomal subunit"/>
    <property type="evidence" value="ECO:0007669"/>
    <property type="project" value="TreeGrafter"/>
</dbReference>
<dbReference type="GO" id="GO:0003735">
    <property type="term" value="F:structural constituent of ribosome"/>
    <property type="evidence" value="ECO:0007669"/>
    <property type="project" value="InterPro"/>
</dbReference>
<dbReference type="GO" id="GO:0006412">
    <property type="term" value="P:translation"/>
    <property type="evidence" value="ECO:0007669"/>
    <property type="project" value="UniProtKB-UniRule"/>
</dbReference>
<dbReference type="Gene3D" id="3.90.1030.10">
    <property type="entry name" value="Ribosomal protein L17"/>
    <property type="match status" value="1"/>
</dbReference>
<dbReference type="HAMAP" id="MF_01368">
    <property type="entry name" value="Ribosomal_bL17"/>
    <property type="match status" value="1"/>
</dbReference>
<dbReference type="InterPro" id="IPR000456">
    <property type="entry name" value="Ribosomal_bL17"/>
</dbReference>
<dbReference type="InterPro" id="IPR047859">
    <property type="entry name" value="Ribosomal_bL17_CS"/>
</dbReference>
<dbReference type="InterPro" id="IPR036373">
    <property type="entry name" value="Ribosomal_bL17_sf"/>
</dbReference>
<dbReference type="NCBIfam" id="TIGR00059">
    <property type="entry name" value="L17"/>
    <property type="match status" value="1"/>
</dbReference>
<dbReference type="PANTHER" id="PTHR14413:SF16">
    <property type="entry name" value="LARGE RIBOSOMAL SUBUNIT PROTEIN BL17M"/>
    <property type="match status" value="1"/>
</dbReference>
<dbReference type="PANTHER" id="PTHR14413">
    <property type="entry name" value="RIBOSOMAL PROTEIN L17"/>
    <property type="match status" value="1"/>
</dbReference>
<dbReference type="Pfam" id="PF01196">
    <property type="entry name" value="Ribosomal_L17"/>
    <property type="match status" value="1"/>
</dbReference>
<dbReference type="SUPFAM" id="SSF64263">
    <property type="entry name" value="Prokaryotic ribosomal protein L17"/>
    <property type="match status" value="1"/>
</dbReference>
<dbReference type="PROSITE" id="PS01167">
    <property type="entry name" value="RIBOSOMAL_L17"/>
    <property type="match status" value="1"/>
</dbReference>
<protein>
    <recommendedName>
        <fullName evidence="1">Large ribosomal subunit protein bL17</fullName>
    </recommendedName>
    <alternativeName>
        <fullName evidence="3">50S ribosomal protein L17</fullName>
    </alternativeName>
</protein>
<feature type="chain" id="PRO_1000144501" description="Large ribosomal subunit protein bL17">
    <location>
        <begin position="1"/>
        <end position="164"/>
    </location>
</feature>
<feature type="region of interest" description="Disordered" evidence="2">
    <location>
        <begin position="127"/>
        <end position="164"/>
    </location>
</feature>
<evidence type="ECO:0000255" key="1">
    <source>
        <dbReference type="HAMAP-Rule" id="MF_01368"/>
    </source>
</evidence>
<evidence type="ECO:0000256" key="2">
    <source>
        <dbReference type="SAM" id="MobiDB-lite"/>
    </source>
</evidence>
<evidence type="ECO:0000305" key="3"/>
<name>RL17_TREPS</name>
<gene>
    <name evidence="1" type="primary">rplQ</name>
    <name type="ordered locus">TPASS_0213</name>
</gene>